<name>ARGI1_ORYSI</name>
<protein>
    <recommendedName>
        <fullName>Arginase 1, mitochondrial</fullName>
        <ecNumber evidence="2">3.5.3.1</ecNumber>
    </recommendedName>
    <alternativeName>
        <fullName>Arginine amidohydrolase 1</fullName>
    </alternativeName>
</protein>
<gene>
    <name type="ORF">B0616E02-H0507E05.7</name>
    <name type="ORF">OsI_14570</name>
</gene>
<proteinExistence type="evidence at protein level"/>
<evidence type="ECO:0000250" key="1"/>
<evidence type="ECO:0000250" key="2">
    <source>
        <dbReference type="UniProtKB" id="P05089"/>
    </source>
</evidence>
<evidence type="ECO:0000250" key="3">
    <source>
        <dbReference type="UniProtKB" id="P53608"/>
    </source>
</evidence>
<evidence type="ECO:0000255" key="4"/>
<evidence type="ECO:0000255" key="5">
    <source>
        <dbReference type="PROSITE-ProRule" id="PRU00742"/>
    </source>
</evidence>
<evidence type="ECO:0000269" key="6">
    <source>
    </source>
</evidence>
<evidence type="ECO:0000305" key="7"/>
<dbReference type="EC" id="3.5.3.1" evidence="2"/>
<dbReference type="EMBL" id="HM369061">
    <property type="protein sequence ID" value="ADK74000.1"/>
    <property type="molecule type" value="mRNA"/>
</dbReference>
<dbReference type="EMBL" id="CR855226">
    <property type="protein sequence ID" value="CAH67831.1"/>
    <property type="molecule type" value="Genomic_DNA"/>
</dbReference>
<dbReference type="EMBL" id="CM000129">
    <property type="protein sequence ID" value="EEC76633.1"/>
    <property type="molecule type" value="Genomic_DNA"/>
</dbReference>
<dbReference type="SMR" id="B8AU84"/>
<dbReference type="STRING" id="39946.B8AU84"/>
<dbReference type="EnsemblPlants" id="BGIOSGA015760-TA">
    <property type="protein sequence ID" value="BGIOSGA015760-PA"/>
    <property type="gene ID" value="BGIOSGA015760"/>
</dbReference>
<dbReference type="Gramene" id="BGIOSGA015760-TA">
    <property type="protein sequence ID" value="BGIOSGA015760-PA"/>
    <property type="gene ID" value="BGIOSGA015760"/>
</dbReference>
<dbReference type="HOGENOM" id="CLU_039478_3_0_1"/>
<dbReference type="OMA" id="CIDAGFV"/>
<dbReference type="SABIO-RK" id="B8AU84"/>
<dbReference type="UniPathway" id="UPA00158">
    <property type="reaction ID" value="UER00270"/>
</dbReference>
<dbReference type="Proteomes" id="UP000007015">
    <property type="component" value="Chromosome 4"/>
</dbReference>
<dbReference type="GO" id="GO:0005739">
    <property type="term" value="C:mitochondrion"/>
    <property type="evidence" value="ECO:0007669"/>
    <property type="project" value="UniProtKB-SubCell"/>
</dbReference>
<dbReference type="GO" id="GO:0008783">
    <property type="term" value="F:agmatinase activity"/>
    <property type="evidence" value="ECO:0007669"/>
    <property type="project" value="TreeGrafter"/>
</dbReference>
<dbReference type="GO" id="GO:0004053">
    <property type="term" value="F:arginase activity"/>
    <property type="evidence" value="ECO:0000314"/>
    <property type="project" value="UniProtKB"/>
</dbReference>
<dbReference type="GO" id="GO:0030145">
    <property type="term" value="F:manganese ion binding"/>
    <property type="evidence" value="ECO:0000314"/>
    <property type="project" value="UniProtKB"/>
</dbReference>
<dbReference type="GO" id="GO:0006527">
    <property type="term" value="P:arginine catabolic process"/>
    <property type="evidence" value="ECO:0000314"/>
    <property type="project" value="UniProtKB"/>
</dbReference>
<dbReference type="GO" id="GO:0033389">
    <property type="term" value="P:putrescine biosynthetic process from arginine, via agmatine"/>
    <property type="evidence" value="ECO:0007669"/>
    <property type="project" value="TreeGrafter"/>
</dbReference>
<dbReference type="GO" id="GO:0000050">
    <property type="term" value="P:urea cycle"/>
    <property type="evidence" value="ECO:0007669"/>
    <property type="project" value="UniProtKB-UniPathway"/>
</dbReference>
<dbReference type="CDD" id="cd11593">
    <property type="entry name" value="Agmatinase-like_2"/>
    <property type="match status" value="1"/>
</dbReference>
<dbReference type="FunFam" id="3.40.800.10:FF:000007">
    <property type="entry name" value="Arginase 1, mitochondrial"/>
    <property type="match status" value="1"/>
</dbReference>
<dbReference type="Gene3D" id="3.40.800.10">
    <property type="entry name" value="Ureohydrolase domain"/>
    <property type="match status" value="1"/>
</dbReference>
<dbReference type="InterPro" id="IPR006035">
    <property type="entry name" value="Ureohydrolase"/>
</dbReference>
<dbReference type="InterPro" id="IPR023696">
    <property type="entry name" value="Ureohydrolase_dom_sf"/>
</dbReference>
<dbReference type="InterPro" id="IPR020855">
    <property type="entry name" value="Ureohydrolase_Mn_BS"/>
</dbReference>
<dbReference type="PANTHER" id="PTHR11358">
    <property type="entry name" value="ARGINASE/AGMATINASE"/>
    <property type="match status" value="1"/>
</dbReference>
<dbReference type="PANTHER" id="PTHR11358:SF26">
    <property type="entry name" value="GUANIDINO ACID HYDROLASE, MITOCHONDRIAL"/>
    <property type="match status" value="1"/>
</dbReference>
<dbReference type="Pfam" id="PF00491">
    <property type="entry name" value="Arginase"/>
    <property type="match status" value="1"/>
</dbReference>
<dbReference type="PIRSF" id="PIRSF036979">
    <property type="entry name" value="Arginase"/>
    <property type="match status" value="1"/>
</dbReference>
<dbReference type="SUPFAM" id="SSF52768">
    <property type="entry name" value="Arginase/deacetylase"/>
    <property type="match status" value="1"/>
</dbReference>
<dbReference type="PROSITE" id="PS01053">
    <property type="entry name" value="ARGINASE_1"/>
    <property type="match status" value="1"/>
</dbReference>
<dbReference type="PROSITE" id="PS51409">
    <property type="entry name" value="ARGINASE_2"/>
    <property type="match status" value="1"/>
</dbReference>
<reference key="1">
    <citation type="journal article" date="2010" name="Plant Physiol.">
        <title>Identification and characterization of proteins involved in rice urea and arginine catabolism.</title>
        <authorList>
            <person name="Cao F.Q."/>
            <person name="Werner A.K."/>
            <person name="Dahncke K."/>
            <person name="Romeis T."/>
            <person name="Liu L.H."/>
            <person name="Witte C.P."/>
        </authorList>
    </citation>
    <scope>NUCLEOTIDE SEQUENCE [MRNA]</scope>
    <scope>FUNCTION</scope>
    <scope>COFACTOR</scope>
    <scope>BIOPHYSICOCHEMICAL PROPERTIES</scope>
    <source>
        <strain>cv. Hunan Late 2</strain>
    </source>
</reference>
<reference key="2">
    <citation type="journal article" date="2002" name="Nature">
        <title>Sequence and analysis of rice chromosome 4.</title>
        <authorList>
            <person name="Feng Q."/>
            <person name="Zhang Y."/>
            <person name="Hao P."/>
            <person name="Wang S."/>
            <person name="Fu G."/>
            <person name="Huang Y."/>
            <person name="Li Y."/>
            <person name="Zhu J."/>
            <person name="Liu Y."/>
            <person name="Hu X."/>
            <person name="Jia P."/>
            <person name="Zhang Y."/>
            <person name="Zhao Q."/>
            <person name="Ying K."/>
            <person name="Yu S."/>
            <person name="Tang Y."/>
            <person name="Weng Q."/>
            <person name="Zhang L."/>
            <person name="Lu Y."/>
            <person name="Mu J."/>
            <person name="Lu Y."/>
            <person name="Zhang L.S."/>
            <person name="Yu Z."/>
            <person name="Fan D."/>
            <person name="Liu X."/>
            <person name="Lu T."/>
            <person name="Li C."/>
            <person name="Wu Y."/>
            <person name="Sun T."/>
            <person name="Lei H."/>
            <person name="Li T."/>
            <person name="Hu H."/>
            <person name="Guan J."/>
            <person name="Wu M."/>
            <person name="Zhang R."/>
            <person name="Zhou B."/>
            <person name="Chen Z."/>
            <person name="Chen L."/>
            <person name="Jin Z."/>
            <person name="Wang R."/>
            <person name="Yin H."/>
            <person name="Cai Z."/>
            <person name="Ren S."/>
            <person name="Lv G."/>
            <person name="Gu W."/>
            <person name="Zhu G."/>
            <person name="Tu Y."/>
            <person name="Jia J."/>
            <person name="Zhang Y."/>
            <person name="Chen J."/>
            <person name="Kang H."/>
            <person name="Chen X."/>
            <person name="Shao C."/>
            <person name="Sun Y."/>
            <person name="Hu Q."/>
            <person name="Zhang X."/>
            <person name="Zhang W."/>
            <person name="Wang L."/>
            <person name="Ding C."/>
            <person name="Sheng H."/>
            <person name="Gu J."/>
            <person name="Chen S."/>
            <person name="Ni L."/>
            <person name="Zhu F."/>
            <person name="Chen W."/>
            <person name="Lan L."/>
            <person name="Lai Y."/>
            <person name="Cheng Z."/>
            <person name="Gu M."/>
            <person name="Jiang J."/>
            <person name="Li J."/>
            <person name="Hong G."/>
            <person name="Xue Y."/>
            <person name="Han B."/>
        </authorList>
    </citation>
    <scope>NUCLEOTIDE SEQUENCE [LARGE SCALE GENOMIC DNA]</scope>
    <source>
        <strain>cv. Guang-Lu-Ai No.4</strain>
    </source>
</reference>
<reference key="3">
    <citation type="journal article" date="2005" name="PLoS Biol.">
        <title>The genomes of Oryza sativa: a history of duplications.</title>
        <authorList>
            <person name="Yu J."/>
            <person name="Wang J."/>
            <person name="Lin W."/>
            <person name="Li S."/>
            <person name="Li H."/>
            <person name="Zhou J."/>
            <person name="Ni P."/>
            <person name="Dong W."/>
            <person name="Hu S."/>
            <person name="Zeng C."/>
            <person name="Zhang J."/>
            <person name="Zhang Y."/>
            <person name="Li R."/>
            <person name="Xu Z."/>
            <person name="Li S."/>
            <person name="Li X."/>
            <person name="Zheng H."/>
            <person name="Cong L."/>
            <person name="Lin L."/>
            <person name="Yin J."/>
            <person name="Geng J."/>
            <person name="Li G."/>
            <person name="Shi J."/>
            <person name="Liu J."/>
            <person name="Lv H."/>
            <person name="Li J."/>
            <person name="Wang J."/>
            <person name="Deng Y."/>
            <person name="Ran L."/>
            <person name="Shi X."/>
            <person name="Wang X."/>
            <person name="Wu Q."/>
            <person name="Li C."/>
            <person name="Ren X."/>
            <person name="Wang J."/>
            <person name="Wang X."/>
            <person name="Li D."/>
            <person name="Liu D."/>
            <person name="Zhang X."/>
            <person name="Ji Z."/>
            <person name="Zhao W."/>
            <person name="Sun Y."/>
            <person name="Zhang Z."/>
            <person name="Bao J."/>
            <person name="Han Y."/>
            <person name="Dong L."/>
            <person name="Ji J."/>
            <person name="Chen P."/>
            <person name="Wu S."/>
            <person name="Liu J."/>
            <person name="Xiao Y."/>
            <person name="Bu D."/>
            <person name="Tan J."/>
            <person name="Yang L."/>
            <person name="Ye C."/>
            <person name="Zhang J."/>
            <person name="Xu J."/>
            <person name="Zhou Y."/>
            <person name="Yu Y."/>
            <person name="Zhang B."/>
            <person name="Zhuang S."/>
            <person name="Wei H."/>
            <person name="Liu B."/>
            <person name="Lei M."/>
            <person name="Yu H."/>
            <person name="Li Y."/>
            <person name="Xu H."/>
            <person name="Wei S."/>
            <person name="He X."/>
            <person name="Fang L."/>
            <person name="Zhang Z."/>
            <person name="Zhang Y."/>
            <person name="Huang X."/>
            <person name="Su Z."/>
            <person name="Tong W."/>
            <person name="Li J."/>
            <person name="Tong Z."/>
            <person name="Li S."/>
            <person name="Ye J."/>
            <person name="Wang L."/>
            <person name="Fang L."/>
            <person name="Lei T."/>
            <person name="Chen C.-S."/>
            <person name="Chen H.-C."/>
            <person name="Xu Z."/>
            <person name="Li H."/>
            <person name="Huang H."/>
            <person name="Zhang F."/>
            <person name="Xu H."/>
            <person name="Li N."/>
            <person name="Zhao C."/>
            <person name="Li S."/>
            <person name="Dong L."/>
            <person name="Huang Y."/>
            <person name="Li L."/>
            <person name="Xi Y."/>
            <person name="Qi Q."/>
            <person name="Li W."/>
            <person name="Zhang B."/>
            <person name="Hu W."/>
            <person name="Zhang Y."/>
            <person name="Tian X."/>
            <person name="Jiao Y."/>
            <person name="Liang X."/>
            <person name="Jin J."/>
            <person name="Gao L."/>
            <person name="Zheng W."/>
            <person name="Hao B."/>
            <person name="Liu S.-M."/>
            <person name="Wang W."/>
            <person name="Yuan L."/>
            <person name="Cao M."/>
            <person name="McDermott J."/>
            <person name="Samudrala R."/>
            <person name="Wang J."/>
            <person name="Wong G.K.-S."/>
            <person name="Yang H."/>
        </authorList>
    </citation>
    <scope>NUCLEOTIDE SEQUENCE [LARGE SCALE GENOMIC DNA]</scope>
    <source>
        <strain>cv. 93-11</strain>
    </source>
</reference>
<comment type="function">
    <text evidence="6">Catalyzes the hydrolysis of L-arginine to urea and L-ornithine. The latter can be utilized in the urea cycle or as a precursor for the synthesis of both polyamines and proline.</text>
</comment>
<comment type="catalytic activity">
    <reaction evidence="2">
        <text>L-arginine + H2O = urea + L-ornithine</text>
        <dbReference type="Rhea" id="RHEA:20569"/>
        <dbReference type="ChEBI" id="CHEBI:15377"/>
        <dbReference type="ChEBI" id="CHEBI:16199"/>
        <dbReference type="ChEBI" id="CHEBI:32682"/>
        <dbReference type="ChEBI" id="CHEBI:46911"/>
        <dbReference type="EC" id="3.5.3.1"/>
    </reaction>
</comment>
<comment type="cofactor">
    <cofactor evidence="5 6">
        <name>Mn(2+)</name>
        <dbReference type="ChEBI" id="CHEBI:29035"/>
    </cofactor>
    <text evidence="5 6">Binds 2 manganese ions per subunit.</text>
</comment>
<comment type="biophysicochemical properties">
    <kinetics>
        <KM evidence="6">17 mM for L-arginine</KM>
        <text>kcat is 490 sec(-1) with L-arginine as substrate.</text>
    </kinetics>
</comment>
<comment type="pathway">
    <text evidence="2">Nitrogen metabolism; urea cycle; L-ornithine and urea from L-arginine: step 1/1.</text>
</comment>
<comment type="subcellular location">
    <subcellularLocation>
        <location evidence="1">Mitochondrion</location>
    </subcellularLocation>
</comment>
<comment type="similarity">
    <text evidence="5">Belongs to the arginase family.</text>
</comment>
<organism>
    <name type="scientific">Oryza sativa subsp. indica</name>
    <name type="common">Rice</name>
    <dbReference type="NCBI Taxonomy" id="39946"/>
    <lineage>
        <taxon>Eukaryota</taxon>
        <taxon>Viridiplantae</taxon>
        <taxon>Streptophyta</taxon>
        <taxon>Embryophyta</taxon>
        <taxon>Tracheophyta</taxon>
        <taxon>Spermatophyta</taxon>
        <taxon>Magnoliopsida</taxon>
        <taxon>Liliopsida</taxon>
        <taxon>Poales</taxon>
        <taxon>Poaceae</taxon>
        <taxon>BOP clade</taxon>
        <taxon>Oryzoideae</taxon>
        <taxon>Oryzeae</taxon>
        <taxon>Oryzinae</taxon>
        <taxon>Oryza</taxon>
        <taxon>Oryza sativa</taxon>
    </lineage>
</organism>
<sequence length="340" mass="36974">MGGVAAGTRWIHHVRRLSAAKVSTDALERGQSRVIDASLTLIRERAKLKAELLRALGGVKASACLLGVPLGHNSSFLQGPAFAPPRIREAIWCGSTNSSTEEGKELNDPRVLTDVGDVPIQEIRDCGVEDDRLMNVVSESVKTVMEEDPLRPLVLGGDHSISYPVVRAVSEKLGGPVDILHLDAHPDIYDAFEGNIYSHASSFARIMEGGYARRLLQVGIRSITKEGREQGKRFGVEQYEMRTFSKDREKLESLKLGEGVKGVYISVDVDCLDPAFAPGVSHIEPGGLSFRDVLNILHNLQGDVVAGDVVEFNPQRDTVDGMTAMVAAKLVRELTAKISK</sequence>
<feature type="transit peptide" description="Mitochondrion" evidence="4">
    <location>
        <begin position="1"/>
        <end position="24"/>
    </location>
</feature>
<feature type="chain" id="PRO_0000424259" description="Arginase 1, mitochondrial">
    <location>
        <begin position="25"/>
        <end position="340"/>
    </location>
</feature>
<feature type="binding site" evidence="5">
    <location>
        <position position="159"/>
    </location>
    <ligand>
        <name>Mn(2+)</name>
        <dbReference type="ChEBI" id="CHEBI:29035"/>
        <label>1</label>
    </ligand>
</feature>
<feature type="binding site" evidence="5">
    <location>
        <position position="183"/>
    </location>
    <ligand>
        <name>Mn(2+)</name>
        <dbReference type="ChEBI" id="CHEBI:29035"/>
        <label>1</label>
    </ligand>
</feature>
<feature type="binding site" evidence="5">
    <location>
        <position position="183"/>
    </location>
    <ligand>
        <name>Mn(2+)</name>
        <dbReference type="ChEBI" id="CHEBI:29035"/>
        <label>2</label>
    </ligand>
</feature>
<feature type="binding site" evidence="3">
    <location>
        <begin position="185"/>
        <end position="189"/>
    </location>
    <ligand>
        <name>substrate</name>
    </ligand>
</feature>
<feature type="binding site" evidence="5">
    <location>
        <position position="185"/>
    </location>
    <ligand>
        <name>Mn(2+)</name>
        <dbReference type="ChEBI" id="CHEBI:29035"/>
        <label>2</label>
    </ligand>
</feature>
<feature type="binding site" evidence="5">
    <location>
        <position position="187"/>
    </location>
    <ligand>
        <name>Mn(2+)</name>
        <dbReference type="ChEBI" id="CHEBI:29035"/>
        <label>1</label>
    </ligand>
</feature>
<feature type="binding site" evidence="3">
    <location>
        <begin position="193"/>
        <end position="195"/>
    </location>
    <ligand>
        <name>substrate</name>
    </ligand>
</feature>
<feature type="binding site" evidence="5">
    <location>
        <position position="268"/>
    </location>
    <ligand>
        <name>Mn(2+)</name>
        <dbReference type="ChEBI" id="CHEBI:29035"/>
        <label>1</label>
    </ligand>
</feature>
<feature type="binding site" evidence="5">
    <location>
        <position position="268"/>
    </location>
    <ligand>
        <name>Mn(2+)</name>
        <dbReference type="ChEBI" id="CHEBI:29035"/>
        <label>2</label>
    </ligand>
</feature>
<feature type="binding site" evidence="5">
    <location>
        <position position="270"/>
    </location>
    <ligand>
        <name>Mn(2+)</name>
        <dbReference type="ChEBI" id="CHEBI:29035"/>
        <label>2</label>
    </ligand>
</feature>
<feature type="binding site" evidence="3">
    <location>
        <position position="311"/>
    </location>
    <ligand>
        <name>substrate</name>
    </ligand>
</feature>
<feature type="sequence conflict" description="In Ref. 1; ADK74000." evidence="7" ref="1">
    <original>T</original>
    <variation>A</variation>
    <location>
        <position position="24"/>
    </location>
</feature>
<accession>B8AU84</accession>
<accession>E0ZS49</accession>
<accession>Q01HW5</accession>
<keyword id="KW-0056">Arginine metabolism</keyword>
<keyword id="KW-0378">Hydrolase</keyword>
<keyword id="KW-0464">Manganese</keyword>
<keyword id="KW-0479">Metal-binding</keyword>
<keyword id="KW-0496">Mitochondrion</keyword>
<keyword id="KW-1185">Reference proteome</keyword>
<keyword id="KW-0809">Transit peptide</keyword>